<name>RPOB_EIMTE</name>
<gene>
    <name type="primary">rpoB</name>
</gene>
<protein>
    <recommendedName>
        <fullName>DNA-directed RNA polymerase subunit beta</fullName>
        <ecNumber>2.7.7.6</ecNumber>
    </recommendedName>
    <alternativeName>
        <fullName>PEP</fullName>
    </alternativeName>
    <alternativeName>
        <fullName>Plastid-encoded RNA polymerase subunit beta</fullName>
        <shortName>RNA polymerase subunit beta</shortName>
    </alternativeName>
</protein>
<reference key="1">
    <citation type="journal article" date="2003" name="Gene">
        <title>Apicoplast genome of the coccidian Eimeria tenella.</title>
        <authorList>
            <person name="Cai X."/>
            <person name="Fuller A.L."/>
            <person name="McDougald L.R."/>
            <person name="Zhu G."/>
        </authorList>
    </citation>
    <scope>NUCLEOTIDE SEQUENCE [LARGE SCALE GENOMIC DNA]</scope>
    <source>
        <strain>Penn State</strain>
    </source>
</reference>
<sequence>MNFQLKNFLILKTLKTFYIEYYKVLIYYLINSIKNYLGDKLYLYYKKNKYTIYILSDFLFFKTTNLTSNITDTVQEFNSKILIFLPLKIKNLKNNKYKIIYYLLGEIPKYTIEKNLIINGLKKTFISKLMFNYIGIFFNKFIKNNNNILYAKIIFNDKFIINIVLEENKCYCIFNNYKYDLICFLYLLGISMQDIFIFSRYNKSFYLKKLLLTLPSLNINNIINYNIFKYLSFFFNLSFKLNTYYIFNKVLNKNNSLYSYIKNFSNSNNLIALDFINILDILLDIKYNKKNITDLDLLEYRSIFTLGNYFTNQYSFYLKKFSNILHNDIFKCIKNLEKYKLNTNSFKSKLYFNLKEYLTVNPLVQYLEQINSFSEIIHKNRVTNYNSKLKQNLQIRNINLNQLGSLCLIDTTEGINCGLVISFTKNIKIEKRNNFQFPYLPVLNIKTKNFITFINSFLQQTYIVLFNNYYLRKNKLFNFFNLSLNKNSFKLKNISIQNMIYIKPMDMFSFAENLIPFIFYNDPARVLMGAKMQSQIVPILKNKRSIIITGYEKNLLNSTNLILKAYQEGIVVYVSSYKIIIRDLYNRKITYFLDKYKRSNHFTILHSKPNVWQGERIFCGQILTSTQDILFSEYIGGNNLLVSYGNFFGYNFEDAIVLNKKIIYSQLFTSLHFKVYEIIFNSLNKFSFEISTINLPKKSFYSKRNLDFFGIIKEGSKVLNNDILVSKIFITNINISLLPLYNLIYILFGKEIKNIKDKSILVSFGNSGRIVKTELFSYSSKIKSYLGYYLKCRVYICKQRLLSVGDKLCGRYGNKGIIAYILPSNDLPYTNTGIIPDIISDSLGIPSRMNIGQLFENLFGLSCYFLNKRLCISNTFNLPKVYIKTILYNYINNIKEKSGNLWIYNSYSPGKILLRDGRQGYKLSEPSFLGISKYSKLIHMIKDKIHYRTIGPYTELMQQPVKGRNKKGGQRFGEMEIWAIEAYGSSYNLRELLNYKSDDIIARTSLLSNLDNNIILDNITTTESFRTLIREIHSMNLNIEAFSSIDQLEGKILPININF</sequence>
<accession>Q7YN57</accession>
<proteinExistence type="inferred from homology"/>
<keyword id="KW-0933">Apicoplast</keyword>
<keyword id="KW-0240">DNA-directed RNA polymerase</keyword>
<keyword id="KW-0548">Nucleotidyltransferase</keyword>
<keyword id="KW-0934">Plastid</keyword>
<keyword id="KW-0804">Transcription</keyword>
<keyword id="KW-0808">Transferase</keyword>
<organism>
    <name type="scientific">Eimeria tenella</name>
    <name type="common">Coccidian parasite</name>
    <dbReference type="NCBI Taxonomy" id="5802"/>
    <lineage>
        <taxon>Eukaryota</taxon>
        <taxon>Sar</taxon>
        <taxon>Alveolata</taxon>
        <taxon>Apicomplexa</taxon>
        <taxon>Conoidasida</taxon>
        <taxon>Coccidia</taxon>
        <taxon>Eucoccidiorida</taxon>
        <taxon>Eimeriorina</taxon>
        <taxon>Eimeriidae</taxon>
        <taxon>Eimeria</taxon>
    </lineage>
</organism>
<dbReference type="EC" id="2.7.7.6"/>
<dbReference type="EMBL" id="AY217738">
    <property type="protein sequence ID" value="AAO40248.1"/>
    <property type="molecule type" value="Genomic_DNA"/>
</dbReference>
<dbReference type="RefSeq" id="NP_852647.1">
    <property type="nucleotide sequence ID" value="NC_004823.1"/>
</dbReference>
<dbReference type="SMR" id="Q7YN57"/>
<dbReference type="VEuPathDB" id="ToxoDB:ETH2_API05200"/>
<dbReference type="VEuPathDB" id="ToxoDB:ETH_00013935"/>
<dbReference type="VEuPathDB" id="ToxoDB:ETH_00019030"/>
<dbReference type="GO" id="GO:0020011">
    <property type="term" value="C:apicoplast"/>
    <property type="evidence" value="ECO:0007669"/>
    <property type="project" value="UniProtKB-SubCell"/>
</dbReference>
<dbReference type="GO" id="GO:0000428">
    <property type="term" value="C:DNA-directed RNA polymerase complex"/>
    <property type="evidence" value="ECO:0007669"/>
    <property type="project" value="UniProtKB-KW"/>
</dbReference>
<dbReference type="GO" id="GO:0005739">
    <property type="term" value="C:mitochondrion"/>
    <property type="evidence" value="ECO:0007669"/>
    <property type="project" value="GOC"/>
</dbReference>
<dbReference type="GO" id="GO:0003677">
    <property type="term" value="F:DNA binding"/>
    <property type="evidence" value="ECO:0007669"/>
    <property type="project" value="InterPro"/>
</dbReference>
<dbReference type="GO" id="GO:0003899">
    <property type="term" value="F:DNA-directed RNA polymerase activity"/>
    <property type="evidence" value="ECO:0007669"/>
    <property type="project" value="UniProtKB-EC"/>
</dbReference>
<dbReference type="GO" id="GO:0032549">
    <property type="term" value="F:ribonucleoside binding"/>
    <property type="evidence" value="ECO:0007669"/>
    <property type="project" value="InterPro"/>
</dbReference>
<dbReference type="GO" id="GO:0006351">
    <property type="term" value="P:DNA-templated transcription"/>
    <property type="evidence" value="ECO:0007669"/>
    <property type="project" value="InterPro"/>
</dbReference>
<dbReference type="Gene3D" id="2.40.50.100">
    <property type="match status" value="1"/>
</dbReference>
<dbReference type="Gene3D" id="2.40.50.150">
    <property type="match status" value="1"/>
</dbReference>
<dbReference type="Gene3D" id="3.90.1100.10">
    <property type="match status" value="2"/>
</dbReference>
<dbReference type="Gene3D" id="2.40.270.10">
    <property type="entry name" value="DNA-directed RNA polymerase, subunit 2, domain 6"/>
    <property type="match status" value="1"/>
</dbReference>
<dbReference type="Gene3D" id="3.90.1800.10">
    <property type="entry name" value="RNA polymerase alpha subunit dimerisation domain"/>
    <property type="match status" value="1"/>
</dbReference>
<dbReference type="InterPro" id="IPR015712">
    <property type="entry name" value="DNA-dir_RNA_pol_su2"/>
</dbReference>
<dbReference type="InterPro" id="IPR007120">
    <property type="entry name" value="DNA-dir_RNAP_su2_dom"/>
</dbReference>
<dbReference type="InterPro" id="IPR037033">
    <property type="entry name" value="DNA-dir_RNAP_su2_hyb_sf"/>
</dbReference>
<dbReference type="InterPro" id="IPR007645">
    <property type="entry name" value="RNA_pol_Rpb2_3"/>
</dbReference>
<dbReference type="InterPro" id="IPR007641">
    <property type="entry name" value="RNA_pol_Rpb2_7"/>
</dbReference>
<dbReference type="InterPro" id="IPR014724">
    <property type="entry name" value="RNA_pol_RPB2_OB-fold"/>
</dbReference>
<dbReference type="PANTHER" id="PTHR20856">
    <property type="entry name" value="DNA-DIRECTED RNA POLYMERASE I SUBUNIT 2"/>
    <property type="match status" value="1"/>
</dbReference>
<dbReference type="Pfam" id="PF04565">
    <property type="entry name" value="RNA_pol_Rpb2_3"/>
    <property type="match status" value="1"/>
</dbReference>
<dbReference type="Pfam" id="PF00562">
    <property type="entry name" value="RNA_pol_Rpb2_6"/>
    <property type="match status" value="1"/>
</dbReference>
<dbReference type="Pfam" id="PF04560">
    <property type="entry name" value="RNA_pol_Rpb2_7"/>
    <property type="match status" value="1"/>
</dbReference>
<dbReference type="SUPFAM" id="SSF64484">
    <property type="entry name" value="beta and beta-prime subunits of DNA dependent RNA-polymerase"/>
    <property type="match status" value="1"/>
</dbReference>
<geneLocation type="apicoplast"/>
<comment type="function">
    <text evidence="1">DNA-dependent RNA polymerase catalyzes the transcription of DNA into RNA using the four ribonucleoside triphosphates as substrates.</text>
</comment>
<comment type="catalytic activity">
    <reaction>
        <text>RNA(n) + a ribonucleoside 5'-triphosphate = RNA(n+1) + diphosphate</text>
        <dbReference type="Rhea" id="RHEA:21248"/>
        <dbReference type="Rhea" id="RHEA-COMP:14527"/>
        <dbReference type="Rhea" id="RHEA-COMP:17342"/>
        <dbReference type="ChEBI" id="CHEBI:33019"/>
        <dbReference type="ChEBI" id="CHEBI:61557"/>
        <dbReference type="ChEBI" id="CHEBI:140395"/>
        <dbReference type="EC" id="2.7.7.6"/>
    </reaction>
</comment>
<comment type="subunit">
    <text evidence="2">In plastids the minimal PEP RNA polymerase catalytic core is composed of four subunits: alpha, beta, beta', and beta''. When a (nuclear-encoded) sigma factor is associated with the core the holoenzyme is formed, which can initiate transcription (Potential).</text>
</comment>
<comment type="subcellular location">
    <subcellularLocation>
        <location>Plastid</location>
        <location>Apicoplast</location>
    </subcellularLocation>
</comment>
<comment type="similarity">
    <text evidence="2">Belongs to the RNA polymerase beta chain family.</text>
</comment>
<feature type="chain" id="PRO_0000300454" description="DNA-directed RNA polymerase subunit beta">
    <location>
        <begin position="1"/>
        <end position="1059"/>
    </location>
</feature>
<evidence type="ECO:0000250" key="1"/>
<evidence type="ECO:0000305" key="2"/>